<dbReference type="EC" id="2.4.2.9" evidence="1"/>
<dbReference type="EMBL" id="CP000266">
    <property type="protein sequence ID" value="ABF04643.1"/>
    <property type="molecule type" value="Genomic_DNA"/>
</dbReference>
<dbReference type="RefSeq" id="WP_001295473.1">
    <property type="nucleotide sequence ID" value="NC_008258.1"/>
</dbReference>
<dbReference type="SMR" id="Q0T222"/>
<dbReference type="GeneID" id="93774638"/>
<dbReference type="KEGG" id="sfv:SFV_2543"/>
<dbReference type="HOGENOM" id="CLU_067096_2_2_6"/>
<dbReference type="UniPathway" id="UPA00574">
    <property type="reaction ID" value="UER00636"/>
</dbReference>
<dbReference type="Proteomes" id="UP000000659">
    <property type="component" value="Chromosome"/>
</dbReference>
<dbReference type="GO" id="GO:0005525">
    <property type="term" value="F:GTP binding"/>
    <property type="evidence" value="ECO:0007669"/>
    <property type="project" value="UniProtKB-KW"/>
</dbReference>
<dbReference type="GO" id="GO:0000287">
    <property type="term" value="F:magnesium ion binding"/>
    <property type="evidence" value="ECO:0007669"/>
    <property type="project" value="UniProtKB-UniRule"/>
</dbReference>
<dbReference type="GO" id="GO:0004845">
    <property type="term" value="F:uracil phosphoribosyltransferase activity"/>
    <property type="evidence" value="ECO:0007669"/>
    <property type="project" value="UniProtKB-UniRule"/>
</dbReference>
<dbReference type="GO" id="GO:0044206">
    <property type="term" value="P:UMP salvage"/>
    <property type="evidence" value="ECO:0007669"/>
    <property type="project" value="UniProtKB-UniRule"/>
</dbReference>
<dbReference type="GO" id="GO:0006223">
    <property type="term" value="P:uracil salvage"/>
    <property type="evidence" value="ECO:0007669"/>
    <property type="project" value="InterPro"/>
</dbReference>
<dbReference type="CDD" id="cd06223">
    <property type="entry name" value="PRTases_typeI"/>
    <property type="match status" value="1"/>
</dbReference>
<dbReference type="FunFam" id="3.40.50.2020:FF:000003">
    <property type="entry name" value="Uracil phosphoribosyltransferase"/>
    <property type="match status" value="1"/>
</dbReference>
<dbReference type="Gene3D" id="3.40.50.2020">
    <property type="match status" value="1"/>
</dbReference>
<dbReference type="HAMAP" id="MF_01218_B">
    <property type="entry name" value="Upp_B"/>
    <property type="match status" value="1"/>
</dbReference>
<dbReference type="InterPro" id="IPR000836">
    <property type="entry name" value="PRibTrfase_dom"/>
</dbReference>
<dbReference type="InterPro" id="IPR029057">
    <property type="entry name" value="PRTase-like"/>
</dbReference>
<dbReference type="InterPro" id="IPR034332">
    <property type="entry name" value="Upp_B"/>
</dbReference>
<dbReference type="InterPro" id="IPR050054">
    <property type="entry name" value="UPRTase/APRTase"/>
</dbReference>
<dbReference type="InterPro" id="IPR005765">
    <property type="entry name" value="Ura_phspho_trans"/>
</dbReference>
<dbReference type="NCBIfam" id="NF001097">
    <property type="entry name" value="PRK00129.1"/>
    <property type="match status" value="1"/>
</dbReference>
<dbReference type="NCBIfam" id="TIGR01091">
    <property type="entry name" value="upp"/>
    <property type="match status" value="1"/>
</dbReference>
<dbReference type="PANTHER" id="PTHR32315">
    <property type="entry name" value="ADENINE PHOSPHORIBOSYLTRANSFERASE"/>
    <property type="match status" value="1"/>
</dbReference>
<dbReference type="PANTHER" id="PTHR32315:SF4">
    <property type="entry name" value="URACIL PHOSPHORIBOSYLTRANSFERASE, CHLOROPLASTIC"/>
    <property type="match status" value="1"/>
</dbReference>
<dbReference type="Pfam" id="PF14681">
    <property type="entry name" value="UPRTase"/>
    <property type="match status" value="1"/>
</dbReference>
<dbReference type="SUPFAM" id="SSF53271">
    <property type="entry name" value="PRTase-like"/>
    <property type="match status" value="1"/>
</dbReference>
<accession>Q0T222</accession>
<keyword id="KW-0021">Allosteric enzyme</keyword>
<keyword id="KW-0328">Glycosyltransferase</keyword>
<keyword id="KW-0342">GTP-binding</keyword>
<keyword id="KW-0460">Magnesium</keyword>
<keyword id="KW-0547">Nucleotide-binding</keyword>
<keyword id="KW-0808">Transferase</keyword>
<name>UPP_SHIF8</name>
<reference key="1">
    <citation type="journal article" date="2006" name="BMC Genomics">
        <title>Complete genome sequence of Shigella flexneri 5b and comparison with Shigella flexneri 2a.</title>
        <authorList>
            <person name="Nie H."/>
            <person name="Yang F."/>
            <person name="Zhang X."/>
            <person name="Yang J."/>
            <person name="Chen L."/>
            <person name="Wang J."/>
            <person name="Xiong Z."/>
            <person name="Peng J."/>
            <person name="Sun L."/>
            <person name="Dong J."/>
            <person name="Xue Y."/>
            <person name="Xu X."/>
            <person name="Chen S."/>
            <person name="Yao Z."/>
            <person name="Shen Y."/>
            <person name="Jin Q."/>
        </authorList>
    </citation>
    <scope>NUCLEOTIDE SEQUENCE [LARGE SCALE GENOMIC DNA]</scope>
    <source>
        <strain>8401</strain>
    </source>
</reference>
<evidence type="ECO:0000255" key="1">
    <source>
        <dbReference type="HAMAP-Rule" id="MF_01218"/>
    </source>
</evidence>
<organism>
    <name type="scientific">Shigella flexneri serotype 5b (strain 8401)</name>
    <dbReference type="NCBI Taxonomy" id="373384"/>
    <lineage>
        <taxon>Bacteria</taxon>
        <taxon>Pseudomonadati</taxon>
        <taxon>Pseudomonadota</taxon>
        <taxon>Gammaproteobacteria</taxon>
        <taxon>Enterobacterales</taxon>
        <taxon>Enterobacteriaceae</taxon>
        <taxon>Shigella</taxon>
    </lineage>
</organism>
<comment type="function">
    <text evidence="1">Catalyzes the conversion of uracil and 5-phospho-alpha-D-ribose 1-diphosphate (PRPP) to UMP and diphosphate.</text>
</comment>
<comment type="catalytic activity">
    <reaction evidence="1">
        <text>UMP + diphosphate = 5-phospho-alpha-D-ribose 1-diphosphate + uracil</text>
        <dbReference type="Rhea" id="RHEA:13017"/>
        <dbReference type="ChEBI" id="CHEBI:17568"/>
        <dbReference type="ChEBI" id="CHEBI:33019"/>
        <dbReference type="ChEBI" id="CHEBI:57865"/>
        <dbReference type="ChEBI" id="CHEBI:58017"/>
        <dbReference type="EC" id="2.4.2.9"/>
    </reaction>
</comment>
<comment type="cofactor">
    <cofactor evidence="1">
        <name>Mg(2+)</name>
        <dbReference type="ChEBI" id="CHEBI:18420"/>
    </cofactor>
    <text evidence="1">Binds 1 Mg(2+) ion per subunit. The magnesium is bound as Mg-PRPP.</text>
</comment>
<comment type="activity regulation">
    <text evidence="1">Allosterically activated by GTP.</text>
</comment>
<comment type="pathway">
    <text evidence="1">Pyrimidine metabolism; UMP biosynthesis via salvage pathway; UMP from uracil: step 1/1.</text>
</comment>
<comment type="similarity">
    <text evidence="1">Belongs to the UPRTase family.</text>
</comment>
<gene>
    <name evidence="1" type="primary">upp</name>
    <name type="ordered locus">SFV_2543</name>
</gene>
<proteinExistence type="inferred from homology"/>
<feature type="chain" id="PRO_1000053787" description="Uracil phosphoribosyltransferase">
    <location>
        <begin position="1"/>
        <end position="208"/>
    </location>
</feature>
<feature type="binding site" evidence="1">
    <location>
        <position position="78"/>
    </location>
    <ligand>
        <name>5-phospho-alpha-D-ribose 1-diphosphate</name>
        <dbReference type="ChEBI" id="CHEBI:58017"/>
    </ligand>
</feature>
<feature type="binding site" evidence="1">
    <location>
        <position position="103"/>
    </location>
    <ligand>
        <name>5-phospho-alpha-D-ribose 1-diphosphate</name>
        <dbReference type="ChEBI" id="CHEBI:58017"/>
    </ligand>
</feature>
<feature type="binding site" evidence="1">
    <location>
        <begin position="130"/>
        <end position="138"/>
    </location>
    <ligand>
        <name>5-phospho-alpha-D-ribose 1-diphosphate</name>
        <dbReference type="ChEBI" id="CHEBI:58017"/>
    </ligand>
</feature>
<feature type="binding site" evidence="1">
    <location>
        <position position="193"/>
    </location>
    <ligand>
        <name>uracil</name>
        <dbReference type="ChEBI" id="CHEBI:17568"/>
    </ligand>
</feature>
<feature type="binding site" evidence="1">
    <location>
        <begin position="198"/>
        <end position="200"/>
    </location>
    <ligand>
        <name>uracil</name>
        <dbReference type="ChEBI" id="CHEBI:17568"/>
    </ligand>
</feature>
<feature type="binding site" evidence="1">
    <location>
        <position position="199"/>
    </location>
    <ligand>
        <name>5-phospho-alpha-D-ribose 1-diphosphate</name>
        <dbReference type="ChEBI" id="CHEBI:58017"/>
    </ligand>
</feature>
<protein>
    <recommendedName>
        <fullName evidence="1">Uracil phosphoribosyltransferase</fullName>
        <ecNumber evidence="1">2.4.2.9</ecNumber>
    </recommendedName>
    <alternativeName>
        <fullName evidence="1">UMP pyrophosphorylase</fullName>
    </alternativeName>
    <alternativeName>
        <fullName evidence="1">UPRTase</fullName>
    </alternativeName>
</protein>
<sequence length="208" mass="22533">MKIVEVKHPLVKHKLGLMREQDISTKRFRELASEVGSLLTYEATADLETEKVTIEGWNGPVEIDQIKGKKITVVPILRAGLGMMDGVLENVPSARISVVGMYRNEETLEPVPYFQKLVSNIDERMALIVDPMLATGGSVIATIDLLKKAGCSSIKVLVLVAAPEGIAALEKAHPDVELYTASIDQGLNEHGYIIPGLGDAGDKIFGTK</sequence>